<gene>
    <name evidence="1" type="primary">gmk</name>
    <name type="ordered locus">GOX0989</name>
</gene>
<comment type="function">
    <text evidence="1">Essential for recycling GMP and indirectly, cGMP.</text>
</comment>
<comment type="catalytic activity">
    <reaction evidence="1">
        <text>GMP + ATP = GDP + ADP</text>
        <dbReference type="Rhea" id="RHEA:20780"/>
        <dbReference type="ChEBI" id="CHEBI:30616"/>
        <dbReference type="ChEBI" id="CHEBI:58115"/>
        <dbReference type="ChEBI" id="CHEBI:58189"/>
        <dbReference type="ChEBI" id="CHEBI:456216"/>
        <dbReference type="EC" id="2.7.4.8"/>
    </reaction>
</comment>
<comment type="subcellular location">
    <subcellularLocation>
        <location evidence="1">Cytoplasm</location>
    </subcellularLocation>
</comment>
<comment type="similarity">
    <text evidence="1">Belongs to the guanylate kinase family.</text>
</comment>
<protein>
    <recommendedName>
        <fullName evidence="1">Guanylate kinase</fullName>
        <ecNumber evidence="1">2.7.4.8</ecNumber>
    </recommendedName>
    <alternativeName>
        <fullName evidence="1">GMP kinase</fullName>
    </alternativeName>
</protein>
<dbReference type="EC" id="2.7.4.8" evidence="1"/>
<dbReference type="EMBL" id="CP000009">
    <property type="protein sequence ID" value="AAW60761.1"/>
    <property type="molecule type" value="Genomic_DNA"/>
</dbReference>
<dbReference type="RefSeq" id="WP_011252555.1">
    <property type="nucleotide sequence ID" value="NC_006677.1"/>
</dbReference>
<dbReference type="SMR" id="Q5FS85"/>
<dbReference type="STRING" id="290633.GOX0989"/>
<dbReference type="KEGG" id="gox:GOX0989"/>
<dbReference type="eggNOG" id="COG0194">
    <property type="taxonomic scope" value="Bacteria"/>
</dbReference>
<dbReference type="HOGENOM" id="CLU_001715_1_1_5"/>
<dbReference type="Proteomes" id="UP000006375">
    <property type="component" value="Chromosome"/>
</dbReference>
<dbReference type="GO" id="GO:0005829">
    <property type="term" value="C:cytosol"/>
    <property type="evidence" value="ECO:0007669"/>
    <property type="project" value="TreeGrafter"/>
</dbReference>
<dbReference type="GO" id="GO:0005524">
    <property type="term" value="F:ATP binding"/>
    <property type="evidence" value="ECO:0007669"/>
    <property type="project" value="UniProtKB-UniRule"/>
</dbReference>
<dbReference type="GO" id="GO:0004385">
    <property type="term" value="F:guanylate kinase activity"/>
    <property type="evidence" value="ECO:0007669"/>
    <property type="project" value="UniProtKB-UniRule"/>
</dbReference>
<dbReference type="CDD" id="cd00071">
    <property type="entry name" value="GMPK"/>
    <property type="match status" value="1"/>
</dbReference>
<dbReference type="FunFam" id="3.30.63.10:FF:000002">
    <property type="entry name" value="Guanylate kinase 1"/>
    <property type="match status" value="1"/>
</dbReference>
<dbReference type="Gene3D" id="3.30.63.10">
    <property type="entry name" value="Guanylate Kinase phosphate binding domain"/>
    <property type="match status" value="1"/>
</dbReference>
<dbReference type="Gene3D" id="3.40.50.300">
    <property type="entry name" value="P-loop containing nucleotide triphosphate hydrolases"/>
    <property type="match status" value="1"/>
</dbReference>
<dbReference type="HAMAP" id="MF_00328">
    <property type="entry name" value="Guanylate_kinase"/>
    <property type="match status" value="1"/>
</dbReference>
<dbReference type="InterPro" id="IPR008145">
    <property type="entry name" value="GK/Ca_channel_bsu"/>
</dbReference>
<dbReference type="InterPro" id="IPR008144">
    <property type="entry name" value="Guanylate_kin-like_dom"/>
</dbReference>
<dbReference type="InterPro" id="IPR017665">
    <property type="entry name" value="Guanylate_kinase"/>
</dbReference>
<dbReference type="InterPro" id="IPR020590">
    <property type="entry name" value="Guanylate_kinase_CS"/>
</dbReference>
<dbReference type="InterPro" id="IPR027417">
    <property type="entry name" value="P-loop_NTPase"/>
</dbReference>
<dbReference type="NCBIfam" id="TIGR03263">
    <property type="entry name" value="guanyl_kin"/>
    <property type="match status" value="1"/>
</dbReference>
<dbReference type="PANTHER" id="PTHR23117:SF13">
    <property type="entry name" value="GUANYLATE KINASE"/>
    <property type="match status" value="1"/>
</dbReference>
<dbReference type="PANTHER" id="PTHR23117">
    <property type="entry name" value="GUANYLATE KINASE-RELATED"/>
    <property type="match status" value="1"/>
</dbReference>
<dbReference type="Pfam" id="PF00625">
    <property type="entry name" value="Guanylate_kin"/>
    <property type="match status" value="1"/>
</dbReference>
<dbReference type="SMART" id="SM00072">
    <property type="entry name" value="GuKc"/>
    <property type="match status" value="1"/>
</dbReference>
<dbReference type="SUPFAM" id="SSF52540">
    <property type="entry name" value="P-loop containing nucleoside triphosphate hydrolases"/>
    <property type="match status" value="1"/>
</dbReference>
<dbReference type="PROSITE" id="PS00856">
    <property type="entry name" value="GUANYLATE_KINASE_1"/>
    <property type="match status" value="1"/>
</dbReference>
<dbReference type="PROSITE" id="PS50052">
    <property type="entry name" value="GUANYLATE_KINASE_2"/>
    <property type="match status" value="1"/>
</dbReference>
<organism>
    <name type="scientific">Gluconobacter oxydans (strain 621H)</name>
    <name type="common">Gluconobacter suboxydans</name>
    <dbReference type="NCBI Taxonomy" id="290633"/>
    <lineage>
        <taxon>Bacteria</taxon>
        <taxon>Pseudomonadati</taxon>
        <taxon>Pseudomonadota</taxon>
        <taxon>Alphaproteobacteria</taxon>
        <taxon>Acetobacterales</taxon>
        <taxon>Acetobacteraceae</taxon>
        <taxon>Gluconobacter</taxon>
    </lineage>
</organism>
<accession>Q5FS85</accession>
<reference key="1">
    <citation type="journal article" date="2005" name="Nat. Biotechnol.">
        <title>Complete genome sequence of the acetic acid bacterium Gluconobacter oxydans.</title>
        <authorList>
            <person name="Prust C."/>
            <person name="Hoffmeister M."/>
            <person name="Liesegang H."/>
            <person name="Wiezer A."/>
            <person name="Fricke W.F."/>
            <person name="Ehrenreich A."/>
            <person name="Gottschalk G."/>
            <person name="Deppenmeier U."/>
        </authorList>
    </citation>
    <scope>NUCLEOTIDE SEQUENCE [LARGE SCALE GENOMIC DNA]</scope>
    <source>
        <strain>621H</strain>
    </source>
</reference>
<name>KGUA_GLUOX</name>
<proteinExistence type="inferred from homology"/>
<feature type="chain" id="PRO_0000266330" description="Guanylate kinase">
    <location>
        <begin position="1"/>
        <end position="208"/>
    </location>
</feature>
<feature type="domain" description="Guanylate kinase-like" evidence="1">
    <location>
        <begin position="8"/>
        <end position="187"/>
    </location>
</feature>
<feature type="binding site" evidence="1">
    <location>
        <begin position="15"/>
        <end position="22"/>
    </location>
    <ligand>
        <name>ATP</name>
        <dbReference type="ChEBI" id="CHEBI:30616"/>
    </ligand>
</feature>
<sequence>MTQLPRRGVCLVISAPSGAGKSTIANALRASEPTLRHSVSVTTRSPRPGEVEGVHYHFRDIAEFRRMAADGELLEWAEVFGRGYGTPRAPVEEALDAGHDMVFDIDWQGHRLLRAALPDDVVSLFVLPPSLEELERRLNKRASDHPEEIARRMKAALDEISHWSEFDHTIINSDLDTAISQARSVLTAARLATRRQRNLLDMVASFSR</sequence>
<evidence type="ECO:0000255" key="1">
    <source>
        <dbReference type="HAMAP-Rule" id="MF_00328"/>
    </source>
</evidence>
<keyword id="KW-0067">ATP-binding</keyword>
<keyword id="KW-0963">Cytoplasm</keyword>
<keyword id="KW-0418">Kinase</keyword>
<keyword id="KW-0547">Nucleotide-binding</keyword>
<keyword id="KW-1185">Reference proteome</keyword>
<keyword id="KW-0808">Transferase</keyword>